<keyword id="KW-0963">Cytoplasm</keyword>
<keyword id="KW-0444">Lipid biosynthesis</keyword>
<keyword id="KW-0443">Lipid metabolism</keyword>
<keyword id="KW-0594">Phospholipid biosynthesis</keyword>
<keyword id="KW-1208">Phospholipid metabolism</keyword>
<keyword id="KW-0808">Transferase</keyword>
<protein>
    <recommendedName>
        <fullName evidence="1">Phosphate acyltransferase</fullName>
        <ecNumber evidence="1">2.3.1.274</ecNumber>
    </recommendedName>
    <alternativeName>
        <fullName evidence="1">Acyl-ACP phosphotransacylase</fullName>
    </alternativeName>
    <alternativeName>
        <fullName evidence="1">Acyl-[acyl-carrier-protein]--phosphate acyltransferase</fullName>
    </alternativeName>
    <alternativeName>
        <fullName evidence="1">Phosphate-acyl-ACP acyltransferase</fullName>
    </alternativeName>
</protein>
<evidence type="ECO:0000255" key="1">
    <source>
        <dbReference type="HAMAP-Rule" id="MF_00019"/>
    </source>
</evidence>
<feature type="chain" id="PRO_1000001750" description="Phosphate acyltransferase">
    <location>
        <begin position="1"/>
        <end position="339"/>
    </location>
</feature>
<accession>Q0TPN3</accession>
<comment type="function">
    <text evidence="1">Catalyzes the reversible formation of acyl-phosphate (acyl-PO(4)) from acyl-[acyl-carrier-protein] (acyl-ACP). This enzyme utilizes acyl-ACP as fatty acyl donor, but not acyl-CoA.</text>
</comment>
<comment type="catalytic activity">
    <reaction evidence="1">
        <text>a fatty acyl-[ACP] + phosphate = an acyl phosphate + holo-[ACP]</text>
        <dbReference type="Rhea" id="RHEA:42292"/>
        <dbReference type="Rhea" id="RHEA-COMP:9685"/>
        <dbReference type="Rhea" id="RHEA-COMP:14125"/>
        <dbReference type="ChEBI" id="CHEBI:43474"/>
        <dbReference type="ChEBI" id="CHEBI:59918"/>
        <dbReference type="ChEBI" id="CHEBI:64479"/>
        <dbReference type="ChEBI" id="CHEBI:138651"/>
        <dbReference type="EC" id="2.3.1.274"/>
    </reaction>
</comment>
<comment type="pathway">
    <text evidence="1">Lipid metabolism; phospholipid metabolism.</text>
</comment>
<comment type="subunit">
    <text evidence="1">Homodimer. Probably interacts with PlsY.</text>
</comment>
<comment type="subcellular location">
    <subcellularLocation>
        <location evidence="1">Cytoplasm</location>
    </subcellularLocation>
    <text evidence="1">Associated with the membrane possibly through PlsY.</text>
</comment>
<comment type="similarity">
    <text evidence="1">Belongs to the PlsX family.</text>
</comment>
<proteinExistence type="inferred from homology"/>
<dbReference type="EC" id="2.3.1.274" evidence="1"/>
<dbReference type="EMBL" id="CP000246">
    <property type="protein sequence ID" value="ABG84874.1"/>
    <property type="molecule type" value="Genomic_DNA"/>
</dbReference>
<dbReference type="RefSeq" id="WP_003458435.1">
    <property type="nucleotide sequence ID" value="NC_008261.1"/>
</dbReference>
<dbReference type="SMR" id="Q0TPN3"/>
<dbReference type="STRING" id="195103.CPF_1974"/>
<dbReference type="PaxDb" id="195103-CPF_1974"/>
<dbReference type="GeneID" id="93001742"/>
<dbReference type="KEGG" id="cpf:CPF_1974"/>
<dbReference type="eggNOG" id="COG0416">
    <property type="taxonomic scope" value="Bacteria"/>
</dbReference>
<dbReference type="HOGENOM" id="CLU_039379_1_1_9"/>
<dbReference type="UniPathway" id="UPA00085"/>
<dbReference type="Proteomes" id="UP000001823">
    <property type="component" value="Chromosome"/>
</dbReference>
<dbReference type="GO" id="GO:0005737">
    <property type="term" value="C:cytoplasm"/>
    <property type="evidence" value="ECO:0007669"/>
    <property type="project" value="UniProtKB-SubCell"/>
</dbReference>
<dbReference type="GO" id="GO:0043811">
    <property type="term" value="F:phosphate:acyl-[acyl carrier protein] acyltransferase activity"/>
    <property type="evidence" value="ECO:0007669"/>
    <property type="project" value="UniProtKB-UniRule"/>
</dbReference>
<dbReference type="GO" id="GO:0006633">
    <property type="term" value="P:fatty acid biosynthetic process"/>
    <property type="evidence" value="ECO:0007669"/>
    <property type="project" value="UniProtKB-UniRule"/>
</dbReference>
<dbReference type="GO" id="GO:0008654">
    <property type="term" value="P:phospholipid biosynthetic process"/>
    <property type="evidence" value="ECO:0007669"/>
    <property type="project" value="UniProtKB-KW"/>
</dbReference>
<dbReference type="Gene3D" id="3.40.718.10">
    <property type="entry name" value="Isopropylmalate Dehydrogenase"/>
    <property type="match status" value="1"/>
</dbReference>
<dbReference type="HAMAP" id="MF_00019">
    <property type="entry name" value="PlsX"/>
    <property type="match status" value="1"/>
</dbReference>
<dbReference type="InterPro" id="IPR003664">
    <property type="entry name" value="FA_synthesis"/>
</dbReference>
<dbReference type="InterPro" id="IPR012281">
    <property type="entry name" value="Phospholipid_synth_PlsX-like"/>
</dbReference>
<dbReference type="NCBIfam" id="TIGR00182">
    <property type="entry name" value="plsX"/>
    <property type="match status" value="1"/>
</dbReference>
<dbReference type="PANTHER" id="PTHR30100">
    <property type="entry name" value="FATTY ACID/PHOSPHOLIPID SYNTHESIS PROTEIN PLSX"/>
    <property type="match status" value="1"/>
</dbReference>
<dbReference type="PANTHER" id="PTHR30100:SF1">
    <property type="entry name" value="PHOSPHATE ACYLTRANSFERASE"/>
    <property type="match status" value="1"/>
</dbReference>
<dbReference type="Pfam" id="PF02504">
    <property type="entry name" value="FA_synthesis"/>
    <property type="match status" value="1"/>
</dbReference>
<dbReference type="PIRSF" id="PIRSF002465">
    <property type="entry name" value="Phsphlp_syn_PlsX"/>
    <property type="match status" value="1"/>
</dbReference>
<dbReference type="SUPFAM" id="SSF53659">
    <property type="entry name" value="Isocitrate/Isopropylmalate dehydrogenase-like"/>
    <property type="match status" value="1"/>
</dbReference>
<name>PLSX_CLOP1</name>
<sequence length="339" mass="36927">MRVAVDGMGGDHSPSAVVEGCVQALEEFKDIEIYITGPEDLLKEAFSKFKYDKERVVFIDAKEVISTNEHPAMAVKKKKDSSLVKALRLVKDNQCEAVISAGSTGAFLTGCTLIVGRIKGVERPALAPVMPGKNGPFMIIDAGANVDSKPSYLVQFAKMGEVYFKSVMDVNNPKVGLVNIGEEEEKGNDLTKATYKLLKEEKDINFIGNVEPREVSTGDVDVLVCDGFVGNTVLKMYEGVASTILSMIKSEVKSSFLAKLGVPFLAPALMNLKKKMDYKEYGGAPFLGVKGICVKAHGSSDAKAFKNAIRQARKFHENDLIGKLSEEITKKSFDNQKNI</sequence>
<reference key="1">
    <citation type="journal article" date="2006" name="Genome Res.">
        <title>Skewed genomic variability in strains of the toxigenic bacterial pathogen, Clostridium perfringens.</title>
        <authorList>
            <person name="Myers G.S.A."/>
            <person name="Rasko D.A."/>
            <person name="Cheung J.K."/>
            <person name="Ravel J."/>
            <person name="Seshadri R."/>
            <person name="DeBoy R.T."/>
            <person name="Ren Q."/>
            <person name="Varga J."/>
            <person name="Awad M.M."/>
            <person name="Brinkac L.M."/>
            <person name="Daugherty S.C."/>
            <person name="Haft D.H."/>
            <person name="Dodson R.J."/>
            <person name="Madupu R."/>
            <person name="Nelson W.C."/>
            <person name="Rosovitz M.J."/>
            <person name="Sullivan S.A."/>
            <person name="Khouri H."/>
            <person name="Dimitrov G.I."/>
            <person name="Watkins K.L."/>
            <person name="Mulligan S."/>
            <person name="Benton J."/>
            <person name="Radune D."/>
            <person name="Fisher D.J."/>
            <person name="Atkins H.S."/>
            <person name="Hiscox T."/>
            <person name="Jost B.H."/>
            <person name="Billington S.J."/>
            <person name="Songer J.G."/>
            <person name="McClane B.A."/>
            <person name="Titball R.W."/>
            <person name="Rood J.I."/>
            <person name="Melville S.B."/>
            <person name="Paulsen I.T."/>
        </authorList>
    </citation>
    <scope>NUCLEOTIDE SEQUENCE [LARGE SCALE GENOMIC DNA]</scope>
    <source>
        <strain>ATCC 13124 / DSM 756 / JCM 1290 / NCIMB 6125 / NCTC 8237 / S 107 / Type A</strain>
    </source>
</reference>
<organism>
    <name type="scientific">Clostridium perfringens (strain ATCC 13124 / DSM 756 / JCM 1290 / NCIMB 6125 / NCTC 8237 / Type A)</name>
    <dbReference type="NCBI Taxonomy" id="195103"/>
    <lineage>
        <taxon>Bacteria</taxon>
        <taxon>Bacillati</taxon>
        <taxon>Bacillota</taxon>
        <taxon>Clostridia</taxon>
        <taxon>Eubacteriales</taxon>
        <taxon>Clostridiaceae</taxon>
        <taxon>Clostridium</taxon>
    </lineage>
</organism>
<gene>
    <name evidence="1" type="primary">plsX</name>
    <name type="ordered locus">CPF_1974</name>
</gene>